<keyword id="KW-0027">Amidation</keyword>
<keyword id="KW-0903">Direct protein sequencing</keyword>
<keyword id="KW-0527">Neuropeptide</keyword>
<keyword id="KW-0964">Secreted</keyword>
<sequence length="19" mass="2048">SGLQFAVLDGQGFLPFPRV</sequence>
<comment type="function">
    <text evidence="1">Mediates visceral muscle contractile activity (myotropic activity).</text>
</comment>
<comment type="subcellular location">
    <subcellularLocation>
        <location evidence="6">Secreted</location>
    </subcellularLocation>
</comment>
<comment type="similarity">
    <text evidence="2">Belongs to the periviscerokinin family.</text>
</comment>
<proteinExistence type="evidence at protein level"/>
<protein>
    <recommendedName>
        <fullName evidence="4">CAPA-Periviscerokinin-2</fullName>
        <shortName evidence="4">CAPA-PVK-2</shortName>
    </recommendedName>
</protein>
<reference evidence="5" key="1">
    <citation type="journal article" date="2012" name="Syst. Biol.">
        <title>Peptidomics-based phylogeny and biogeography of Mantophasmatodea (Hexapoda).</title>
        <authorList>
            <person name="Predel R."/>
            <person name="Neupert S."/>
            <person name="Huetteroth W."/>
            <person name="Kahnt J."/>
            <person name="Waidelich D."/>
            <person name="Roth S."/>
        </authorList>
    </citation>
    <scope>PROTEIN SEQUENCE</scope>
    <scope>AMIDATION AT VAL-19</scope>
    <source>
        <tissue evidence="3">Abdominal perisympathetic organs</tissue>
    </source>
</reference>
<evidence type="ECO:0000250" key="1">
    <source>
        <dbReference type="UniProtKB" id="P83923"/>
    </source>
</evidence>
<evidence type="ECO:0000255" key="2"/>
<evidence type="ECO:0000269" key="3">
    <source>
    </source>
</evidence>
<evidence type="ECO:0000303" key="4">
    <source>
    </source>
</evidence>
<evidence type="ECO:0000305" key="5"/>
<evidence type="ECO:0000305" key="6">
    <source>
    </source>
</evidence>
<accession>B3A0B9</accession>
<organism>
    <name type="scientific">Hemilobophasma montaguense</name>
    <name type="common">Gladiator</name>
    <name type="synonym">Heel-walker</name>
    <dbReference type="NCBI Taxonomy" id="253130"/>
    <lineage>
        <taxon>Eukaryota</taxon>
        <taxon>Metazoa</taxon>
        <taxon>Ecdysozoa</taxon>
        <taxon>Arthropoda</taxon>
        <taxon>Hexapoda</taxon>
        <taxon>Insecta</taxon>
        <taxon>Pterygota</taxon>
        <taxon>Neoptera</taxon>
        <taxon>Polyneoptera</taxon>
        <taxon>Mantophasmatodea</taxon>
        <taxon>Austrophasmatidae</taxon>
        <taxon>Hemilobophasma</taxon>
    </lineage>
</organism>
<dbReference type="GO" id="GO:0005576">
    <property type="term" value="C:extracellular region"/>
    <property type="evidence" value="ECO:0007669"/>
    <property type="project" value="UniProtKB-SubCell"/>
</dbReference>
<dbReference type="GO" id="GO:0007218">
    <property type="term" value="P:neuropeptide signaling pathway"/>
    <property type="evidence" value="ECO:0007669"/>
    <property type="project" value="UniProtKB-KW"/>
</dbReference>
<feature type="peptide" id="PRO_0000421644" description="CAPA-Periviscerokinin-2" evidence="3">
    <location>
        <begin position="1"/>
        <end position="19"/>
    </location>
</feature>
<feature type="modified residue" description="Valine amide" evidence="3">
    <location>
        <position position="19"/>
    </location>
</feature>
<name>PVK2_HEMMO</name>